<name>HEM3_GEOKA</name>
<reference key="1">
    <citation type="journal article" date="2004" name="Nucleic Acids Res.">
        <title>Thermoadaptation trait revealed by the genome sequence of thermophilic Geobacillus kaustophilus.</title>
        <authorList>
            <person name="Takami H."/>
            <person name="Takaki Y."/>
            <person name="Chee G.-J."/>
            <person name="Nishi S."/>
            <person name="Shimamura S."/>
            <person name="Suzuki H."/>
            <person name="Matsui S."/>
            <person name="Uchiyama I."/>
        </authorList>
    </citation>
    <scope>NUCLEOTIDE SEQUENCE [LARGE SCALE GENOMIC DNA]</scope>
    <source>
        <strain>HTA426</strain>
    </source>
</reference>
<gene>
    <name evidence="1" type="primary">hemC</name>
    <name type="ordered locus">GK2645</name>
</gene>
<dbReference type="EC" id="2.5.1.61" evidence="1"/>
<dbReference type="EMBL" id="BA000043">
    <property type="protein sequence ID" value="BAD76930.1"/>
    <property type="molecule type" value="Genomic_DNA"/>
</dbReference>
<dbReference type="RefSeq" id="WP_011232121.1">
    <property type="nucleotide sequence ID" value="NC_006510.1"/>
</dbReference>
<dbReference type="SMR" id="Q5KWK6"/>
<dbReference type="STRING" id="235909.GK2645"/>
<dbReference type="KEGG" id="gka:GK2645"/>
<dbReference type="PATRIC" id="fig|235909.7.peg.2826"/>
<dbReference type="eggNOG" id="COG0181">
    <property type="taxonomic scope" value="Bacteria"/>
</dbReference>
<dbReference type="HOGENOM" id="CLU_019704_0_2_9"/>
<dbReference type="UniPathway" id="UPA00251">
    <property type="reaction ID" value="UER00319"/>
</dbReference>
<dbReference type="Proteomes" id="UP000001172">
    <property type="component" value="Chromosome"/>
</dbReference>
<dbReference type="GO" id="GO:0005737">
    <property type="term" value="C:cytoplasm"/>
    <property type="evidence" value="ECO:0007669"/>
    <property type="project" value="TreeGrafter"/>
</dbReference>
<dbReference type="GO" id="GO:0004418">
    <property type="term" value="F:hydroxymethylbilane synthase activity"/>
    <property type="evidence" value="ECO:0007669"/>
    <property type="project" value="UniProtKB-UniRule"/>
</dbReference>
<dbReference type="GO" id="GO:0006782">
    <property type="term" value="P:protoporphyrinogen IX biosynthetic process"/>
    <property type="evidence" value="ECO:0007669"/>
    <property type="project" value="UniProtKB-UniRule"/>
</dbReference>
<dbReference type="CDD" id="cd13646">
    <property type="entry name" value="PBP2_EcHMBS_like"/>
    <property type="match status" value="1"/>
</dbReference>
<dbReference type="FunFam" id="3.30.160.40:FF:000001">
    <property type="entry name" value="Porphobilinogen deaminase"/>
    <property type="match status" value="1"/>
</dbReference>
<dbReference type="FunFam" id="3.40.190.10:FF:000004">
    <property type="entry name" value="Porphobilinogen deaminase"/>
    <property type="match status" value="1"/>
</dbReference>
<dbReference type="FunFam" id="3.40.190.10:FF:000005">
    <property type="entry name" value="Porphobilinogen deaminase"/>
    <property type="match status" value="1"/>
</dbReference>
<dbReference type="Gene3D" id="3.40.190.10">
    <property type="entry name" value="Periplasmic binding protein-like II"/>
    <property type="match status" value="2"/>
</dbReference>
<dbReference type="Gene3D" id="3.30.160.40">
    <property type="entry name" value="Porphobilinogen deaminase, C-terminal domain"/>
    <property type="match status" value="1"/>
</dbReference>
<dbReference type="HAMAP" id="MF_00260">
    <property type="entry name" value="Porphobil_deam"/>
    <property type="match status" value="1"/>
</dbReference>
<dbReference type="InterPro" id="IPR000860">
    <property type="entry name" value="HemC"/>
</dbReference>
<dbReference type="InterPro" id="IPR022419">
    <property type="entry name" value="Porphobilin_deaminase_cofac_BS"/>
</dbReference>
<dbReference type="InterPro" id="IPR022417">
    <property type="entry name" value="Porphobilin_deaminase_N"/>
</dbReference>
<dbReference type="InterPro" id="IPR022418">
    <property type="entry name" value="Porphobilinogen_deaminase_C"/>
</dbReference>
<dbReference type="InterPro" id="IPR036803">
    <property type="entry name" value="Porphobilinogen_deaminase_C_sf"/>
</dbReference>
<dbReference type="NCBIfam" id="TIGR00212">
    <property type="entry name" value="hemC"/>
    <property type="match status" value="1"/>
</dbReference>
<dbReference type="PANTHER" id="PTHR11557">
    <property type="entry name" value="PORPHOBILINOGEN DEAMINASE"/>
    <property type="match status" value="1"/>
</dbReference>
<dbReference type="PANTHER" id="PTHR11557:SF0">
    <property type="entry name" value="PORPHOBILINOGEN DEAMINASE"/>
    <property type="match status" value="1"/>
</dbReference>
<dbReference type="Pfam" id="PF01379">
    <property type="entry name" value="Porphobil_deam"/>
    <property type="match status" value="1"/>
</dbReference>
<dbReference type="Pfam" id="PF03900">
    <property type="entry name" value="Porphobil_deamC"/>
    <property type="match status" value="1"/>
</dbReference>
<dbReference type="PIRSF" id="PIRSF001438">
    <property type="entry name" value="4pyrrol_synth_OHMeBilane_synth"/>
    <property type="match status" value="1"/>
</dbReference>
<dbReference type="PRINTS" id="PR00151">
    <property type="entry name" value="PORPHBDMNASE"/>
</dbReference>
<dbReference type="SUPFAM" id="SSF53850">
    <property type="entry name" value="Periplasmic binding protein-like II"/>
    <property type="match status" value="1"/>
</dbReference>
<dbReference type="SUPFAM" id="SSF54782">
    <property type="entry name" value="Porphobilinogen deaminase (hydroxymethylbilane synthase), C-terminal domain"/>
    <property type="match status" value="1"/>
</dbReference>
<dbReference type="PROSITE" id="PS00533">
    <property type="entry name" value="PORPHOBILINOGEN_DEAM"/>
    <property type="match status" value="1"/>
</dbReference>
<sequence length="309" mass="33667">MRNIVVGSRRSKLALTQTKWVINELKQLGAPFTFEVKEIVTKGDRVLDVTLSKVGGKGLFVKEIEHELLAGGIDMAVHSMKDMPAVLPEGLVIGAVSRREDARDVLVSKGNRMLSDLPPGSVIGTSSLRRSAQLLAYRPDLTIKWIRGNIDTRLAKLESEEYDAIVLAAAGLARMGWGDDVISDYLPFDVCVPAVGQGALAVECREDDDELRQWLSRLNDEQTERAVRAERAFLQQMEGGCQVPIAGYAEVKEGTVRLTALVASPDGKEMYKEIVTGADPEAVGRQAAAILSEQGAKALIERVKKELGD</sequence>
<comment type="function">
    <text evidence="1">Tetrapolymerization of the monopyrrole PBG into the hydroxymethylbilane pre-uroporphyrinogen in several discrete steps.</text>
</comment>
<comment type="catalytic activity">
    <reaction evidence="1">
        <text>4 porphobilinogen + H2O = hydroxymethylbilane + 4 NH4(+)</text>
        <dbReference type="Rhea" id="RHEA:13185"/>
        <dbReference type="ChEBI" id="CHEBI:15377"/>
        <dbReference type="ChEBI" id="CHEBI:28938"/>
        <dbReference type="ChEBI" id="CHEBI:57845"/>
        <dbReference type="ChEBI" id="CHEBI:58126"/>
        <dbReference type="EC" id="2.5.1.61"/>
    </reaction>
</comment>
<comment type="cofactor">
    <cofactor evidence="1">
        <name>dipyrromethane</name>
        <dbReference type="ChEBI" id="CHEBI:60342"/>
    </cofactor>
    <text evidence="1">Binds 1 dipyrromethane group covalently.</text>
</comment>
<comment type="pathway">
    <text evidence="1">Porphyrin-containing compound metabolism; protoporphyrin-IX biosynthesis; coproporphyrinogen-III from 5-aminolevulinate: step 2/4.</text>
</comment>
<comment type="subunit">
    <text evidence="1">Monomer.</text>
</comment>
<comment type="miscellaneous">
    <text evidence="1">The porphobilinogen subunits are added to the dipyrromethane group.</text>
</comment>
<comment type="similarity">
    <text evidence="1">Belongs to the HMBS family.</text>
</comment>
<evidence type="ECO:0000255" key="1">
    <source>
        <dbReference type="HAMAP-Rule" id="MF_00260"/>
    </source>
</evidence>
<organism>
    <name type="scientific">Geobacillus kaustophilus (strain HTA426)</name>
    <dbReference type="NCBI Taxonomy" id="235909"/>
    <lineage>
        <taxon>Bacteria</taxon>
        <taxon>Bacillati</taxon>
        <taxon>Bacillota</taxon>
        <taxon>Bacilli</taxon>
        <taxon>Bacillales</taxon>
        <taxon>Anoxybacillaceae</taxon>
        <taxon>Geobacillus</taxon>
        <taxon>Geobacillus thermoleovorans group</taxon>
    </lineage>
</organism>
<feature type="chain" id="PRO_0000142941" description="Porphobilinogen deaminase">
    <location>
        <begin position="1"/>
        <end position="309"/>
    </location>
</feature>
<feature type="modified residue" description="S-(dipyrrolylmethanemethyl)cysteine" evidence="1">
    <location>
        <position position="241"/>
    </location>
</feature>
<proteinExistence type="inferred from homology"/>
<accession>Q5KWK6</accession>
<keyword id="KW-0627">Porphyrin biosynthesis</keyword>
<keyword id="KW-1185">Reference proteome</keyword>
<keyword id="KW-0808">Transferase</keyword>
<protein>
    <recommendedName>
        <fullName evidence="1">Porphobilinogen deaminase</fullName>
        <shortName evidence="1">PBG</shortName>
        <ecNumber evidence="1">2.5.1.61</ecNumber>
    </recommendedName>
    <alternativeName>
        <fullName evidence="1">Hydroxymethylbilane synthase</fullName>
        <shortName evidence="1">HMBS</shortName>
    </alternativeName>
    <alternativeName>
        <fullName evidence="1">Pre-uroporphyrinogen synthase</fullName>
    </alternativeName>
</protein>